<gene>
    <name type="primary">PSBO</name>
</gene>
<evidence type="ECO:0000250" key="1"/>
<evidence type="ECO:0000305" key="2"/>
<feature type="transit peptide" description="Chloroplast" evidence="1">
    <location>
        <begin position="1"/>
        <end position="82"/>
    </location>
</feature>
<feature type="chain" id="PRO_0000029557" description="Oxygen-evolving enhancer protein 1, chloroplastic">
    <location>
        <begin position="83"/>
        <end position="329"/>
    </location>
</feature>
<reference key="1">
    <citation type="submission" date="1997-12" db="EMBL/GenBank/DDBJ databases">
        <authorList>
            <person name="Panico E."/>
            <person name="Baysdorfer C."/>
        </authorList>
    </citation>
    <scope>NUCLEOTIDE SEQUENCE [MRNA]</scope>
</reference>
<keyword id="KW-0150">Chloroplast</keyword>
<keyword id="KW-0464">Manganese</keyword>
<keyword id="KW-0472">Membrane</keyword>
<keyword id="KW-0602">Photosynthesis</keyword>
<keyword id="KW-0604">Photosystem II</keyword>
<keyword id="KW-0934">Plastid</keyword>
<keyword id="KW-0793">Thylakoid</keyword>
<keyword id="KW-0809">Transit peptide</keyword>
<accession>O49079</accession>
<sequence>MASSLQAAATLIPAKVGAPARTHLRSNSHLSKAFGFDNSTAGRLTCSINSDLRDIAQKCTDAAKLAGFALATSALVISGASAEGVPKRLTFDEIQSKTYMEVKGSGTANQCPTIEGGTESFGYKTGKYTLKKLCLEPTSFTVKAEGINKNAPPEFQKTKLMTRLTYTLDEIEGPFEVAPDGTVKFEEKDGIDYAAVTVQLPGGERVPFLFTVKQLVATGKPESFSGSYLVPSYRGSSFLDPKGRGGSAGYDNAVALPAGGRGDEEELVKENIKDVSSSTGKITLSVTKSKPETGEVIGVFESIQPSDTDLGSKAPKDVKIQGIWYAQLE</sequence>
<dbReference type="EMBL" id="AF037457">
    <property type="protein sequence ID" value="AAC04808.1"/>
    <property type="molecule type" value="mRNA"/>
</dbReference>
<dbReference type="SMR" id="O49079"/>
<dbReference type="GO" id="GO:0009535">
    <property type="term" value="C:chloroplast thylakoid membrane"/>
    <property type="evidence" value="ECO:0007669"/>
    <property type="project" value="UniProtKB-SubCell"/>
</dbReference>
<dbReference type="GO" id="GO:0009654">
    <property type="term" value="C:photosystem II oxygen evolving complex"/>
    <property type="evidence" value="ECO:0007669"/>
    <property type="project" value="InterPro"/>
</dbReference>
<dbReference type="GO" id="GO:0010242">
    <property type="term" value="F:oxygen evolving activity"/>
    <property type="evidence" value="ECO:0007669"/>
    <property type="project" value="InterPro"/>
</dbReference>
<dbReference type="GO" id="GO:0010207">
    <property type="term" value="P:photosystem II assembly"/>
    <property type="evidence" value="ECO:0007669"/>
    <property type="project" value="InterPro"/>
</dbReference>
<dbReference type="GO" id="GO:0042549">
    <property type="term" value="P:photosystem II stabilization"/>
    <property type="evidence" value="ECO:0007669"/>
    <property type="project" value="InterPro"/>
</dbReference>
<dbReference type="FunFam" id="3.30.2050.10:FF:000001">
    <property type="entry name" value="Oxygen-evolving enhancer protein 1, chloroplastic"/>
    <property type="match status" value="1"/>
</dbReference>
<dbReference type="Gene3D" id="3.30.2050.10">
    <property type="entry name" value="photosynthetic oxygen evolving center domain"/>
    <property type="match status" value="1"/>
</dbReference>
<dbReference type="Gene3D" id="2.40.160.30">
    <property type="entry name" value="Photosystem II, cytochrome c-550 precursor"/>
    <property type="match status" value="1"/>
</dbReference>
<dbReference type="InterPro" id="IPR011250">
    <property type="entry name" value="OMP/PagP_b-brl"/>
</dbReference>
<dbReference type="InterPro" id="IPR002628">
    <property type="entry name" value="PsbO"/>
</dbReference>
<dbReference type="PANTHER" id="PTHR34058">
    <property type="entry name" value="OXYGEN-EVOLVING ENHANCER PROTEIN 1-2, CHLOROPLASTIC"/>
    <property type="match status" value="1"/>
</dbReference>
<dbReference type="Pfam" id="PF01716">
    <property type="entry name" value="MSP"/>
    <property type="match status" value="1"/>
</dbReference>
<dbReference type="SUPFAM" id="SSF56925">
    <property type="entry name" value="OMPA-like"/>
    <property type="match status" value="1"/>
</dbReference>
<comment type="function">
    <text evidence="1">Stabilizes the manganese cluster which is the primary site of water splitting.</text>
</comment>
<comment type="subcellular location">
    <subcellularLocation>
        <location>Plastid</location>
        <location>Chloroplast thylakoid membrane</location>
    </subcellularLocation>
    <text>Associated with the photosystem II complex.</text>
</comment>
<comment type="similarity">
    <text evidence="2">Belongs to the PsbO family.</text>
</comment>
<proteinExistence type="evidence at transcript level"/>
<name>PSBO_FRIAG</name>
<organism>
    <name type="scientific">Fritillaria agrestis</name>
    <name type="common">Stinkbells</name>
    <dbReference type="NCBI Taxonomy" id="64177"/>
    <lineage>
        <taxon>Eukaryota</taxon>
        <taxon>Viridiplantae</taxon>
        <taxon>Streptophyta</taxon>
        <taxon>Embryophyta</taxon>
        <taxon>Tracheophyta</taxon>
        <taxon>Spermatophyta</taxon>
        <taxon>Magnoliopsida</taxon>
        <taxon>Liliopsida</taxon>
        <taxon>Liliales</taxon>
        <taxon>Liliaceae</taxon>
        <taxon>Fritillaria</taxon>
    </lineage>
</organism>
<protein>
    <recommendedName>
        <fullName>Oxygen-evolving enhancer protein 1, chloroplastic</fullName>
        <shortName>OEE1</shortName>
    </recommendedName>
    <alternativeName>
        <fullName>33 kDa subunit of oxygen evolving system of photosystem II</fullName>
    </alternativeName>
    <alternativeName>
        <fullName>33 kDa thylakoid membrane protein</fullName>
    </alternativeName>
    <alternativeName>
        <fullName>OEC 33 kDa subunit</fullName>
    </alternativeName>
</protein>